<feature type="chain" id="PRO_0000252106" description="Allergen Asp fl 1">
    <location>
        <begin position="1" status="less than"/>
        <end position="32" status="greater than"/>
    </location>
</feature>
<feature type="non-terminal residue">
    <location>
        <position position="1"/>
    </location>
</feature>
<feature type="non-terminal residue">
    <location>
        <position position="32"/>
    </location>
</feature>
<name>ALL1_ASPFL</name>
<sequence>TPSQCTAAQANKCCTGLTNGILNLNVLPALNP</sequence>
<accession>P82257</accession>
<proteinExistence type="evidence at protein level"/>
<protein>
    <recommendedName>
        <fullName>Allergen Asp fl 1</fullName>
    </recommendedName>
    <alternativeName>
        <fullName>Allergen Asp l 1</fullName>
    </alternativeName>
    <allergenName>Asp fl 1</allergenName>
</protein>
<dbReference type="GO" id="GO:0019863">
    <property type="term" value="F:IgE binding"/>
    <property type="evidence" value="ECO:0007669"/>
    <property type="project" value="UniProtKB-KW"/>
</dbReference>
<dbReference type="GO" id="GO:0019864">
    <property type="term" value="F:IgG binding"/>
    <property type="evidence" value="ECO:0007669"/>
    <property type="project" value="UniProtKB-KW"/>
</dbReference>
<reference evidence="2" key="1">
    <citation type="submission" date="1999-12" db="UniProtKB">
        <authorList>
            <person name="Sarma P.U."/>
            <person name="Paliwal A."/>
            <person name="Fairwell T."/>
        </authorList>
    </citation>
    <scope>PROTEIN SEQUENCE</scope>
    <scope>ALLERGEN</scope>
    <source>
        <strain>AFL-1505 / Indian isolate</strain>
    </source>
</reference>
<keyword id="KW-0020">Allergen</keyword>
<keyword id="KW-0903">Direct protein sequencing</keyword>
<keyword id="KW-0389">IgE-binding protein</keyword>
<keyword id="KW-0390">IgG-binding protein</keyword>
<organism>
    <name type="scientific">Aspergillus flavus</name>
    <dbReference type="NCBI Taxonomy" id="5059"/>
    <lineage>
        <taxon>Eukaryota</taxon>
        <taxon>Fungi</taxon>
        <taxon>Dikarya</taxon>
        <taxon>Ascomycota</taxon>
        <taxon>Pezizomycotina</taxon>
        <taxon>Eurotiomycetes</taxon>
        <taxon>Eurotiomycetidae</taxon>
        <taxon>Eurotiales</taxon>
        <taxon>Aspergillaceae</taxon>
        <taxon>Aspergillus</taxon>
        <taxon>Aspergillus subgen. Circumdati</taxon>
    </lineage>
</organism>
<comment type="allergen">
    <text evidence="1">Causes an allergic reaction in human. Binds to IgE and IgG.</text>
</comment>
<evidence type="ECO:0000269" key="1">
    <source ref="1"/>
</evidence>
<evidence type="ECO:0000305" key="2"/>